<gene>
    <name evidence="1" type="primary">CIA1</name>
    <name type="ORF">CD36_52510</name>
</gene>
<keyword id="KW-0963">Cytoplasm</keyword>
<keyword id="KW-0539">Nucleus</keyword>
<keyword id="KW-0677">Repeat</keyword>
<keyword id="KW-0853">WD repeat</keyword>
<organism>
    <name type="scientific">Candida dubliniensis (strain CD36 / ATCC MYA-646 / CBS 7987 / NCPF 3949 / NRRL Y-17841)</name>
    <name type="common">Yeast</name>
    <dbReference type="NCBI Taxonomy" id="573826"/>
    <lineage>
        <taxon>Eukaryota</taxon>
        <taxon>Fungi</taxon>
        <taxon>Dikarya</taxon>
        <taxon>Ascomycota</taxon>
        <taxon>Saccharomycotina</taxon>
        <taxon>Pichiomycetes</taxon>
        <taxon>Debaryomycetaceae</taxon>
        <taxon>Candida/Lodderomyces clade</taxon>
        <taxon>Candida</taxon>
    </lineage>
</organism>
<sequence length="380" mass="42381">MVELLHSIKAHNDKAWSVSVHPTLPIIATASTDKSTKLYKLSTKQKFPLVAELEDTHKRSIRSVAFKPPLGGVDAPKLDFLDLPALAAGSFDSTISVWGIDEPDVEYDIDEVVANQKEILTSPNNEWNLMAIIEGHENEVKAVDWNFQGQYLASCSRDKTVWIWETDPETLEEFECVAVLNDHSQDVKNVSWHPSMNILASSSYDDTIRIYQQDIAGDEWSCVGILNGHEGTVWCSKFESFKSPTADSSILRLVSASDDLSVRIWVAKREEEEDKPELPSSIKHTKEMVWEVESVLPAVHKYPVYSVAWSSLTGKIASAGSDGKIVVYSEAEKGKWVIDSVHEGSHGVHEINCVIWAQLDDENEILVSAGDDGYVNLWNV</sequence>
<name>CIAO1_CANDC</name>
<protein>
    <recommendedName>
        <fullName evidence="1">Probable cytosolic iron-sulfur protein assembly protein 1</fullName>
    </recommendedName>
</protein>
<reference key="1">
    <citation type="journal article" date="2009" name="Genome Res.">
        <title>Comparative genomics of the fungal pathogens Candida dubliniensis and Candida albicans.</title>
        <authorList>
            <person name="Jackson A.P."/>
            <person name="Gamble J.A."/>
            <person name="Yeomans T."/>
            <person name="Moran G.P."/>
            <person name="Saunders D."/>
            <person name="Harris D."/>
            <person name="Aslett M."/>
            <person name="Barrell J.F."/>
            <person name="Butler G."/>
            <person name="Citiulo F."/>
            <person name="Coleman D.C."/>
            <person name="de Groot P.W.J."/>
            <person name="Goodwin T.J."/>
            <person name="Quail M.A."/>
            <person name="McQuillan J."/>
            <person name="Munro C.A."/>
            <person name="Pain A."/>
            <person name="Poulter R.T."/>
            <person name="Rajandream M.A."/>
            <person name="Renauld H."/>
            <person name="Spiering M.J."/>
            <person name="Tivey A."/>
            <person name="Gow N.A.R."/>
            <person name="Barrell B."/>
            <person name="Sullivan D.J."/>
            <person name="Berriman M."/>
        </authorList>
    </citation>
    <scope>NUCLEOTIDE SEQUENCE [LARGE SCALE GENOMIC DNA]</scope>
    <source>
        <strain>CD36 / ATCC MYA-646 / CBS 7987 / NCPF 3949 / NRRL Y-17841</strain>
    </source>
</reference>
<proteinExistence type="inferred from homology"/>
<dbReference type="EMBL" id="FM992692">
    <property type="protein sequence ID" value="CAX41634.1"/>
    <property type="molecule type" value="Genomic_DNA"/>
</dbReference>
<dbReference type="RefSeq" id="XP_002420555.1">
    <property type="nucleotide sequence ID" value="XM_002420510.1"/>
</dbReference>
<dbReference type="SMR" id="B9WHJ2"/>
<dbReference type="GeneID" id="8048431"/>
<dbReference type="KEGG" id="cdu:CD36_52510"/>
<dbReference type="CGD" id="CAL0000168133">
    <property type="gene designation" value="Cd36_52510"/>
</dbReference>
<dbReference type="VEuPathDB" id="FungiDB:CD36_52510"/>
<dbReference type="eggNOG" id="KOG0645">
    <property type="taxonomic scope" value="Eukaryota"/>
</dbReference>
<dbReference type="HOGENOM" id="CLU_000288_57_8_1"/>
<dbReference type="OrthoDB" id="284782at2759"/>
<dbReference type="Proteomes" id="UP000002605">
    <property type="component" value="Chromosome 5"/>
</dbReference>
<dbReference type="GO" id="GO:0097361">
    <property type="term" value="C:cytosolic [4Fe-4S] assembly targeting complex"/>
    <property type="evidence" value="ECO:0007669"/>
    <property type="project" value="InterPro"/>
</dbReference>
<dbReference type="GO" id="GO:0005634">
    <property type="term" value="C:nucleus"/>
    <property type="evidence" value="ECO:0007669"/>
    <property type="project" value="UniProtKB-SubCell"/>
</dbReference>
<dbReference type="GO" id="GO:0016226">
    <property type="term" value="P:iron-sulfur cluster assembly"/>
    <property type="evidence" value="ECO:0007669"/>
    <property type="project" value="UniProtKB-UniRule"/>
</dbReference>
<dbReference type="CDD" id="cd00200">
    <property type="entry name" value="WD40"/>
    <property type="match status" value="1"/>
</dbReference>
<dbReference type="FunFam" id="2.130.10.10:FF:001309">
    <property type="entry name" value="Probable cytosolic iron-sulfur protein assembly protein 1"/>
    <property type="match status" value="1"/>
</dbReference>
<dbReference type="Gene3D" id="2.130.10.10">
    <property type="entry name" value="YVTN repeat-like/Quinoprotein amine dehydrogenase"/>
    <property type="match status" value="1"/>
</dbReference>
<dbReference type="HAMAP" id="MF_03037">
    <property type="entry name" value="ciao1"/>
    <property type="match status" value="1"/>
</dbReference>
<dbReference type="InterPro" id="IPR028608">
    <property type="entry name" value="CIAO1/Cia1"/>
</dbReference>
<dbReference type="InterPro" id="IPR020472">
    <property type="entry name" value="G-protein_beta_WD-40_rep"/>
</dbReference>
<dbReference type="InterPro" id="IPR015943">
    <property type="entry name" value="WD40/YVTN_repeat-like_dom_sf"/>
</dbReference>
<dbReference type="InterPro" id="IPR019775">
    <property type="entry name" value="WD40_repeat_CS"/>
</dbReference>
<dbReference type="InterPro" id="IPR036322">
    <property type="entry name" value="WD40_repeat_dom_sf"/>
</dbReference>
<dbReference type="InterPro" id="IPR001680">
    <property type="entry name" value="WD40_rpt"/>
</dbReference>
<dbReference type="PANTHER" id="PTHR19920:SF0">
    <property type="entry name" value="CYTOSOLIC IRON-SULFUR PROTEIN ASSEMBLY PROTEIN CIAO1-RELATED"/>
    <property type="match status" value="1"/>
</dbReference>
<dbReference type="PANTHER" id="PTHR19920">
    <property type="entry name" value="WD40 PROTEIN CIAO1"/>
    <property type="match status" value="1"/>
</dbReference>
<dbReference type="Pfam" id="PF00400">
    <property type="entry name" value="WD40"/>
    <property type="match status" value="6"/>
</dbReference>
<dbReference type="PRINTS" id="PR00320">
    <property type="entry name" value="GPROTEINBRPT"/>
</dbReference>
<dbReference type="SMART" id="SM00320">
    <property type="entry name" value="WD40"/>
    <property type="match status" value="7"/>
</dbReference>
<dbReference type="SUPFAM" id="SSF50978">
    <property type="entry name" value="WD40 repeat-like"/>
    <property type="match status" value="1"/>
</dbReference>
<dbReference type="PROSITE" id="PS00678">
    <property type="entry name" value="WD_REPEATS_1"/>
    <property type="match status" value="2"/>
</dbReference>
<dbReference type="PROSITE" id="PS50082">
    <property type="entry name" value="WD_REPEATS_2"/>
    <property type="match status" value="4"/>
</dbReference>
<dbReference type="PROSITE" id="PS50294">
    <property type="entry name" value="WD_REPEATS_REGION"/>
    <property type="match status" value="1"/>
</dbReference>
<feature type="chain" id="PRO_0000382509" description="Probable cytosolic iron-sulfur protein assembly protein 1">
    <location>
        <begin position="1"/>
        <end position="380"/>
    </location>
</feature>
<feature type="repeat" description="WD 1">
    <location>
        <begin position="10"/>
        <end position="49"/>
    </location>
</feature>
<feature type="repeat" description="WD 2">
    <location>
        <begin position="56"/>
        <end position="108"/>
    </location>
</feature>
<feature type="repeat" description="WD 3">
    <location>
        <begin position="135"/>
        <end position="175"/>
    </location>
</feature>
<feature type="repeat" description="WD 4">
    <location>
        <begin position="182"/>
        <end position="221"/>
    </location>
</feature>
<feature type="repeat" description="WD 5">
    <location>
        <begin position="228"/>
        <end position="275"/>
    </location>
</feature>
<feature type="repeat" description="WD 6">
    <location>
        <begin position="299"/>
        <end position="338"/>
    </location>
</feature>
<feature type="repeat" description="WD 7">
    <location>
        <begin position="346"/>
        <end position="380"/>
    </location>
</feature>
<evidence type="ECO:0000255" key="1">
    <source>
        <dbReference type="HAMAP-Rule" id="MF_03037"/>
    </source>
</evidence>
<accession>B9WHJ2</accession>
<comment type="function">
    <text evidence="1">Essential component of the cytosolic iron-sulfur (Fe/S) protein assembly machinery. Required for the maturation of extramitochondrial Fe/S proteins.</text>
</comment>
<comment type="subunit">
    <text evidence="1">Interacts with NAR1.</text>
</comment>
<comment type="subcellular location">
    <subcellularLocation>
        <location evidence="1">Cytoplasm</location>
    </subcellularLocation>
    <subcellularLocation>
        <location evidence="1">Nucleus</location>
    </subcellularLocation>
    <text evidence="1">Preferentially localized to the nucleus.</text>
</comment>
<comment type="similarity">
    <text evidence="1">Belongs to the WD repeat CIA1 family.</text>
</comment>